<proteinExistence type="evidence at protein level"/>
<dbReference type="EC" id="3.1.3.-" evidence="20"/>
<dbReference type="EMBL" id="AF378756">
    <property type="protein sequence ID" value="AAL11993.1"/>
    <property type="molecule type" value="mRNA"/>
</dbReference>
<dbReference type="EMBL" id="AF417489">
    <property type="protein sequence ID" value="AAN32667.1"/>
    <property type="molecule type" value="mRNA"/>
</dbReference>
<dbReference type="EMBL" id="AK092864">
    <property type="protein sequence ID" value="BAC03993.1"/>
    <property type="molecule type" value="mRNA"/>
</dbReference>
<dbReference type="EMBL" id="CR749644">
    <property type="protein sequence ID" value="CAH18438.1"/>
    <property type="molecule type" value="mRNA"/>
</dbReference>
<dbReference type="EMBL" id="AC073341">
    <property type="protein sequence ID" value="AAQ96841.1"/>
    <property type="molecule type" value="Genomic_DNA"/>
</dbReference>
<dbReference type="EMBL" id="CH471128">
    <property type="protein sequence ID" value="EAW61011.1"/>
    <property type="molecule type" value="Genomic_DNA"/>
</dbReference>
<dbReference type="EMBL" id="BC071791">
    <property type="protein sequence ID" value="AAH71791.1"/>
    <property type="molecule type" value="mRNA"/>
</dbReference>
<dbReference type="EMBL" id="BC137133">
    <property type="protein sequence ID" value="AAI37134.1"/>
    <property type="molecule type" value="mRNA"/>
</dbReference>
<dbReference type="EMBL" id="BC137134">
    <property type="protein sequence ID" value="AAI37135.1"/>
    <property type="molecule type" value="mRNA"/>
</dbReference>
<dbReference type="EMBL" id="AB062750">
    <property type="protein sequence ID" value="BAB60681.1"/>
    <property type="molecule type" value="mRNA"/>
</dbReference>
<dbReference type="CCDS" id="CCDS5506.2">
    <molecule id="Q68CZ2-1"/>
</dbReference>
<dbReference type="RefSeq" id="NP_073585.8">
    <molecule id="Q68CZ2-1"/>
    <property type="nucleotide sequence ID" value="NM_022748.11"/>
</dbReference>
<dbReference type="RefSeq" id="XP_011513782.1">
    <molecule id="Q68CZ2-1"/>
    <property type="nucleotide sequence ID" value="XM_011515480.4"/>
</dbReference>
<dbReference type="RefSeq" id="XP_011513783.1">
    <molecule id="Q68CZ2-1"/>
    <property type="nucleotide sequence ID" value="XM_011515481.3"/>
</dbReference>
<dbReference type="RefSeq" id="XP_011513784.1">
    <property type="nucleotide sequence ID" value="XM_011515482.2"/>
</dbReference>
<dbReference type="RefSeq" id="XP_011513785.1">
    <molecule id="Q68CZ2-1"/>
    <property type="nucleotide sequence ID" value="XM_011515483.3"/>
</dbReference>
<dbReference type="RefSeq" id="XP_016868028.1">
    <property type="nucleotide sequence ID" value="XM_017012539.1"/>
</dbReference>
<dbReference type="RefSeq" id="XP_024302644.1">
    <molecule id="Q68CZ2-1"/>
    <property type="nucleotide sequence ID" value="XM_024446876.2"/>
</dbReference>
<dbReference type="RefSeq" id="XP_047276686.1">
    <molecule id="Q68CZ2-1"/>
    <property type="nucleotide sequence ID" value="XM_047420730.1"/>
</dbReference>
<dbReference type="RefSeq" id="XP_047276687.1">
    <molecule id="Q68CZ2-1"/>
    <property type="nucleotide sequence ID" value="XM_047420731.1"/>
</dbReference>
<dbReference type="RefSeq" id="XP_047276688.1">
    <molecule id="Q68CZ2-1"/>
    <property type="nucleotide sequence ID" value="XM_047420732.1"/>
</dbReference>
<dbReference type="RefSeq" id="XP_047276689.1">
    <molecule id="Q68CZ2-1"/>
    <property type="nucleotide sequence ID" value="XM_047420733.1"/>
</dbReference>
<dbReference type="RefSeq" id="XP_047276691.1">
    <molecule id="Q68CZ2-1"/>
    <property type="nucleotide sequence ID" value="XM_047420735.1"/>
</dbReference>
<dbReference type="RefSeq" id="XP_047276692.1">
    <molecule id="Q68CZ2-1"/>
    <property type="nucleotide sequence ID" value="XM_047420736.1"/>
</dbReference>
<dbReference type="RefSeq" id="XP_047276693.1">
    <molecule id="Q68CZ2-1"/>
    <property type="nucleotide sequence ID" value="XM_047420737.1"/>
</dbReference>
<dbReference type="RefSeq" id="XP_047276694.1">
    <molecule id="Q68CZ2-1"/>
    <property type="nucleotide sequence ID" value="XM_047420738.1"/>
</dbReference>
<dbReference type="RefSeq" id="XP_054214803.1">
    <molecule id="Q68CZ2-1"/>
    <property type="nucleotide sequence ID" value="XM_054358828.1"/>
</dbReference>
<dbReference type="RefSeq" id="XP_054214804.1">
    <molecule id="Q68CZ2-1"/>
    <property type="nucleotide sequence ID" value="XM_054358829.1"/>
</dbReference>
<dbReference type="RefSeq" id="XP_054214805.1">
    <molecule id="Q68CZ2-1"/>
    <property type="nucleotide sequence ID" value="XM_054358830.1"/>
</dbReference>
<dbReference type="RefSeq" id="XP_054214806.1">
    <molecule id="Q68CZ2-1"/>
    <property type="nucleotide sequence ID" value="XM_054358831.1"/>
</dbReference>
<dbReference type="RefSeq" id="XP_054214807.1">
    <molecule id="Q68CZ2-1"/>
    <property type="nucleotide sequence ID" value="XM_054358832.1"/>
</dbReference>
<dbReference type="RefSeq" id="XP_054214808.1">
    <molecule id="Q68CZ2-1"/>
    <property type="nucleotide sequence ID" value="XM_054358833.1"/>
</dbReference>
<dbReference type="RefSeq" id="XP_054214809.1">
    <molecule id="Q68CZ2-1"/>
    <property type="nucleotide sequence ID" value="XM_054358834.1"/>
</dbReference>
<dbReference type="RefSeq" id="XP_054214810.1">
    <molecule id="Q68CZ2-1"/>
    <property type="nucleotide sequence ID" value="XM_054358835.1"/>
</dbReference>
<dbReference type="SMR" id="Q68CZ2"/>
<dbReference type="BioGRID" id="122272">
    <property type="interactions" value="84"/>
</dbReference>
<dbReference type="FunCoup" id="Q68CZ2">
    <property type="interactions" value="366"/>
</dbReference>
<dbReference type="IntAct" id="Q68CZ2">
    <property type="interactions" value="148"/>
</dbReference>
<dbReference type="MINT" id="Q68CZ2"/>
<dbReference type="STRING" id="9606.ENSP00000312143"/>
<dbReference type="ChEMBL" id="CHEMBL4295861"/>
<dbReference type="DEPOD" id="TNS3"/>
<dbReference type="GlyGen" id="Q68CZ2">
    <property type="glycosylation" value="2 sites, 1 O-linked glycan (1 site)"/>
</dbReference>
<dbReference type="iPTMnet" id="Q68CZ2"/>
<dbReference type="MetOSite" id="Q68CZ2"/>
<dbReference type="PhosphoSitePlus" id="Q68CZ2"/>
<dbReference type="SwissPalm" id="Q68CZ2"/>
<dbReference type="BioMuta" id="TNS3"/>
<dbReference type="DMDM" id="156637424"/>
<dbReference type="jPOST" id="Q68CZ2"/>
<dbReference type="MassIVE" id="Q68CZ2"/>
<dbReference type="PaxDb" id="9606-ENSP00000312143"/>
<dbReference type="PeptideAtlas" id="Q68CZ2"/>
<dbReference type="ProteomicsDB" id="66036">
    <molecule id="Q68CZ2-1"/>
</dbReference>
<dbReference type="ProteomicsDB" id="66037">
    <molecule id="Q68CZ2-2"/>
</dbReference>
<dbReference type="ProteomicsDB" id="66038">
    <molecule id="Q68CZ2-3"/>
</dbReference>
<dbReference type="ProteomicsDB" id="66039">
    <molecule id="Q68CZ2-4"/>
</dbReference>
<dbReference type="Pumba" id="Q68CZ2"/>
<dbReference type="Antibodypedia" id="1019">
    <property type="antibodies" value="142 antibodies from 26 providers"/>
</dbReference>
<dbReference type="DNASU" id="64759"/>
<dbReference type="Ensembl" id="ENST00000311160.14">
    <molecule id="Q68CZ2-1"/>
    <property type="protein sequence ID" value="ENSP00000312143.9"/>
    <property type="gene ID" value="ENSG00000136205.18"/>
</dbReference>
<dbReference type="Ensembl" id="ENST00000442536.6">
    <molecule id="Q68CZ2-4"/>
    <property type="protein sequence ID" value="ENSP00000389285.2"/>
    <property type="gene ID" value="ENSG00000136205.18"/>
</dbReference>
<dbReference type="GeneID" id="64759"/>
<dbReference type="KEGG" id="hsa:64759"/>
<dbReference type="MANE-Select" id="ENST00000311160.14">
    <property type="protein sequence ID" value="ENSP00000312143.9"/>
    <property type="RefSeq nucleotide sequence ID" value="NM_022748.12"/>
    <property type="RefSeq protein sequence ID" value="NP_073585.8"/>
</dbReference>
<dbReference type="UCSC" id="uc003tnw.3">
    <molecule id="Q68CZ2-1"/>
    <property type="organism name" value="human"/>
</dbReference>
<dbReference type="AGR" id="HGNC:21616"/>
<dbReference type="CTD" id="64759"/>
<dbReference type="DisGeNET" id="64759"/>
<dbReference type="GeneCards" id="TNS3"/>
<dbReference type="HGNC" id="HGNC:21616">
    <property type="gene designation" value="TNS3"/>
</dbReference>
<dbReference type="HPA" id="ENSG00000136205">
    <property type="expression patterns" value="Low tissue specificity"/>
</dbReference>
<dbReference type="MalaCards" id="TNS3"/>
<dbReference type="MIM" id="606825">
    <property type="type" value="gene"/>
</dbReference>
<dbReference type="neXtProt" id="NX_Q68CZ2"/>
<dbReference type="OpenTargets" id="ENSG00000136205"/>
<dbReference type="PharmGKB" id="PA134888115"/>
<dbReference type="VEuPathDB" id="HostDB:ENSG00000136205"/>
<dbReference type="eggNOG" id="KOG1930">
    <property type="taxonomic scope" value="Eukaryota"/>
</dbReference>
<dbReference type="eggNOG" id="KOG2283">
    <property type="taxonomic scope" value="Eukaryota"/>
</dbReference>
<dbReference type="GeneTree" id="ENSGT00940000156328"/>
<dbReference type="HOGENOM" id="CLU_002189_1_0_1"/>
<dbReference type="InParanoid" id="Q68CZ2"/>
<dbReference type="OMA" id="QGSEHLH"/>
<dbReference type="OrthoDB" id="6273691at2759"/>
<dbReference type="PAN-GO" id="Q68CZ2">
    <property type="GO annotations" value="1 GO annotation based on evolutionary models"/>
</dbReference>
<dbReference type="PhylomeDB" id="Q68CZ2"/>
<dbReference type="TreeFam" id="TF315996"/>
<dbReference type="PathwayCommons" id="Q68CZ2"/>
<dbReference type="Reactome" id="R-HSA-8875513">
    <property type="pathway name" value="MET interacts with TNS proteins"/>
</dbReference>
<dbReference type="SignaLink" id="Q68CZ2"/>
<dbReference type="SIGNOR" id="Q68CZ2"/>
<dbReference type="BioGRID-ORCS" id="64759">
    <property type="hits" value="83 hits in 1155 CRISPR screens"/>
</dbReference>
<dbReference type="ChiTaRS" id="TNS3">
    <property type="organism name" value="human"/>
</dbReference>
<dbReference type="GenomeRNAi" id="64759"/>
<dbReference type="Pharos" id="Q68CZ2">
    <property type="development level" value="Tbio"/>
</dbReference>
<dbReference type="PRO" id="PR:Q68CZ2"/>
<dbReference type="Proteomes" id="UP000005640">
    <property type="component" value="Chromosome 7"/>
</dbReference>
<dbReference type="RNAct" id="Q68CZ2">
    <property type="molecule type" value="protein"/>
</dbReference>
<dbReference type="Bgee" id="ENSG00000136205">
    <property type="expression patterns" value="Expressed in renal glomerulus and 204 other cell types or tissues"/>
</dbReference>
<dbReference type="ExpressionAtlas" id="Q68CZ2">
    <property type="expression patterns" value="baseline and differential"/>
</dbReference>
<dbReference type="GO" id="GO:0042995">
    <property type="term" value="C:cell projection"/>
    <property type="evidence" value="ECO:0007669"/>
    <property type="project" value="UniProtKB-KW"/>
</dbReference>
<dbReference type="GO" id="GO:0005829">
    <property type="term" value="C:cytosol"/>
    <property type="evidence" value="ECO:0000314"/>
    <property type="project" value="HPA"/>
</dbReference>
<dbReference type="GO" id="GO:0005925">
    <property type="term" value="C:focal adhesion"/>
    <property type="evidence" value="ECO:0000314"/>
    <property type="project" value="HPA"/>
</dbReference>
<dbReference type="GO" id="GO:0002102">
    <property type="term" value="C:podosome"/>
    <property type="evidence" value="ECO:0007669"/>
    <property type="project" value="UniProtKB-SubCell"/>
</dbReference>
<dbReference type="GO" id="GO:0004721">
    <property type="term" value="F:phosphoprotein phosphatase activity"/>
    <property type="evidence" value="ECO:0007669"/>
    <property type="project" value="UniProtKB-KW"/>
</dbReference>
<dbReference type="GO" id="GO:0035022">
    <property type="term" value="P:positive regulation of Rac protein signal transduction"/>
    <property type="evidence" value="ECO:0000318"/>
    <property type="project" value="GO_Central"/>
</dbReference>
<dbReference type="CDD" id="cd01213">
    <property type="entry name" value="PTB_tensin"/>
    <property type="match status" value="1"/>
</dbReference>
<dbReference type="CDD" id="cd14561">
    <property type="entry name" value="PTP_tensin-3"/>
    <property type="match status" value="1"/>
</dbReference>
<dbReference type="CDD" id="cd09927">
    <property type="entry name" value="SH2_Tensin_like"/>
    <property type="match status" value="1"/>
</dbReference>
<dbReference type="FunFam" id="2.30.29.30:FF:000039">
    <property type="entry name" value="Tensin 1"/>
    <property type="match status" value="1"/>
</dbReference>
<dbReference type="FunFam" id="3.30.505.10:FF:000002">
    <property type="entry name" value="Tensin 1"/>
    <property type="match status" value="1"/>
</dbReference>
<dbReference type="FunFam" id="2.60.40.1110:FF:000002">
    <property type="entry name" value="tensin-1 isoform X2"/>
    <property type="match status" value="1"/>
</dbReference>
<dbReference type="FunFam" id="3.90.190.10:FF:000010">
    <property type="entry name" value="tensin-1 isoform X2"/>
    <property type="match status" value="1"/>
</dbReference>
<dbReference type="Gene3D" id="2.60.40.1110">
    <property type="match status" value="1"/>
</dbReference>
<dbReference type="Gene3D" id="2.30.29.30">
    <property type="entry name" value="Pleckstrin-homology domain (PH domain)/Phosphotyrosine-binding domain (PTB)"/>
    <property type="match status" value="1"/>
</dbReference>
<dbReference type="Gene3D" id="3.90.190.10">
    <property type="entry name" value="Protein tyrosine phosphatase superfamily"/>
    <property type="match status" value="1"/>
</dbReference>
<dbReference type="Gene3D" id="3.30.505.10">
    <property type="entry name" value="SH2 domain"/>
    <property type="match status" value="1"/>
</dbReference>
<dbReference type="InterPro" id="IPR035892">
    <property type="entry name" value="C2_domain_sf"/>
</dbReference>
<dbReference type="InterPro" id="IPR011993">
    <property type="entry name" value="PH-like_dom_sf"/>
</dbReference>
<dbReference type="InterPro" id="IPR029021">
    <property type="entry name" value="Prot-tyrosine_phosphatase-like"/>
</dbReference>
<dbReference type="InterPro" id="IPR013625">
    <property type="entry name" value="PTB"/>
</dbReference>
<dbReference type="InterPro" id="IPR006020">
    <property type="entry name" value="PTB/PI_dom"/>
</dbReference>
<dbReference type="InterPro" id="IPR000980">
    <property type="entry name" value="SH2"/>
</dbReference>
<dbReference type="InterPro" id="IPR036860">
    <property type="entry name" value="SH2_dom_sf"/>
</dbReference>
<dbReference type="InterPro" id="IPR035012">
    <property type="entry name" value="Tensin-like_SH2"/>
</dbReference>
<dbReference type="InterPro" id="IPR014020">
    <property type="entry name" value="Tensin_C2-dom"/>
</dbReference>
<dbReference type="InterPro" id="IPR029023">
    <property type="entry name" value="Tensin_phosphatase"/>
</dbReference>
<dbReference type="InterPro" id="IPR033929">
    <property type="entry name" value="Tensin_PTB"/>
</dbReference>
<dbReference type="InterPro" id="IPR051484">
    <property type="entry name" value="Tensin_PTEN_phosphatase"/>
</dbReference>
<dbReference type="InterPro" id="IPR003595">
    <property type="entry name" value="Tyr_Pase_cat"/>
</dbReference>
<dbReference type="InterPro" id="IPR000387">
    <property type="entry name" value="Tyr_Pase_dom"/>
</dbReference>
<dbReference type="PANTHER" id="PTHR45734">
    <property type="entry name" value="TENSIN"/>
    <property type="match status" value="1"/>
</dbReference>
<dbReference type="PANTHER" id="PTHR45734:SF5">
    <property type="entry name" value="TENSIN-3"/>
    <property type="match status" value="1"/>
</dbReference>
<dbReference type="Pfam" id="PF08416">
    <property type="entry name" value="PTB"/>
    <property type="match status" value="1"/>
</dbReference>
<dbReference type="Pfam" id="PF10409">
    <property type="entry name" value="PTEN_C2"/>
    <property type="match status" value="1"/>
</dbReference>
<dbReference type="Pfam" id="PF00017">
    <property type="entry name" value="SH2"/>
    <property type="match status" value="1"/>
</dbReference>
<dbReference type="SMART" id="SM00462">
    <property type="entry name" value="PTB"/>
    <property type="match status" value="1"/>
</dbReference>
<dbReference type="SMART" id="SM01326">
    <property type="entry name" value="PTEN_C2"/>
    <property type="match status" value="1"/>
</dbReference>
<dbReference type="SMART" id="SM00404">
    <property type="entry name" value="PTPc_motif"/>
    <property type="match status" value="1"/>
</dbReference>
<dbReference type="SMART" id="SM00252">
    <property type="entry name" value="SH2"/>
    <property type="match status" value="1"/>
</dbReference>
<dbReference type="SUPFAM" id="SSF52799">
    <property type="entry name" value="(Phosphotyrosine protein) phosphatases II"/>
    <property type="match status" value="1"/>
</dbReference>
<dbReference type="SUPFAM" id="SSF49562">
    <property type="entry name" value="C2 domain (Calcium/lipid-binding domain, CaLB)"/>
    <property type="match status" value="1"/>
</dbReference>
<dbReference type="SUPFAM" id="SSF50729">
    <property type="entry name" value="PH domain-like"/>
    <property type="match status" value="1"/>
</dbReference>
<dbReference type="SUPFAM" id="SSF55550">
    <property type="entry name" value="SH2 domain"/>
    <property type="match status" value="1"/>
</dbReference>
<dbReference type="PROSITE" id="PS51182">
    <property type="entry name" value="C2_TENSIN"/>
    <property type="match status" value="1"/>
</dbReference>
<dbReference type="PROSITE" id="PS51181">
    <property type="entry name" value="PPASE_TENSIN"/>
    <property type="match status" value="1"/>
</dbReference>
<dbReference type="PROSITE" id="PS50001">
    <property type="entry name" value="SH2"/>
    <property type="match status" value="1"/>
</dbReference>
<gene>
    <name type="primary">TNS3</name>
    <name type="synonym">TEM6</name>
    <name type="synonym">TENS1</name>
    <name type="synonym">TPP</name>
</gene>
<name>TENS3_HUMAN</name>
<accession>Q68CZ2</accession>
<accession>B2RNV1</accession>
<accession>Q6IPQ2</accession>
<accession>Q8IZW7</accession>
<accession>Q8NAD0</accession>
<accession>Q96PE0</accession>
<accession>Q96S48</accession>
<evidence type="ECO:0000250" key="1">
    <source>
        <dbReference type="UniProtKB" id="Q5SSZ5"/>
    </source>
</evidence>
<evidence type="ECO:0000255" key="2"/>
<evidence type="ECO:0000255" key="3">
    <source>
        <dbReference type="PROSITE-ProRule" id="PRU00191"/>
    </source>
</evidence>
<evidence type="ECO:0000255" key="4">
    <source>
        <dbReference type="PROSITE-ProRule" id="PRU00589"/>
    </source>
</evidence>
<evidence type="ECO:0000255" key="5">
    <source>
        <dbReference type="PROSITE-ProRule" id="PRU00590"/>
    </source>
</evidence>
<evidence type="ECO:0000256" key="6">
    <source>
        <dbReference type="SAM" id="MobiDB-lite"/>
    </source>
</evidence>
<evidence type="ECO:0000269" key="7">
    <source>
    </source>
</evidence>
<evidence type="ECO:0000269" key="8">
    <source>
    </source>
</evidence>
<evidence type="ECO:0000269" key="9">
    <source>
    </source>
</evidence>
<evidence type="ECO:0000269" key="10">
    <source>
    </source>
</evidence>
<evidence type="ECO:0000269" key="11">
    <source>
    </source>
</evidence>
<evidence type="ECO:0000269" key="12">
    <source>
    </source>
</evidence>
<evidence type="ECO:0000269" key="13">
    <source>
    </source>
</evidence>
<evidence type="ECO:0000269" key="14">
    <source>
    </source>
</evidence>
<evidence type="ECO:0000269" key="15">
    <source>
    </source>
</evidence>
<evidence type="ECO:0000269" key="16">
    <source>
    </source>
</evidence>
<evidence type="ECO:0000303" key="17">
    <source>
    </source>
</evidence>
<evidence type="ECO:0000303" key="18">
    <source>
    </source>
</evidence>
<evidence type="ECO:0000303" key="19">
    <source>
    </source>
</evidence>
<evidence type="ECO:0000305" key="20"/>
<evidence type="ECO:0007744" key="21">
    <source>
    </source>
</evidence>
<evidence type="ECO:0007744" key="22">
    <source>
    </source>
</evidence>
<evidence type="ECO:0007744" key="23">
    <source>
    </source>
</evidence>
<evidence type="ECO:0007744" key="24">
    <source>
    </source>
</evidence>
<comment type="function">
    <text evidence="1 10 13 14 15 16 20">May act as a protein phosphatase and/or a lipid phosphatase (Probable). Involved in the dissociation of the integrin-tensin-actin complex (PubMed:17643115). EGF activates TNS4 and down-regulates TNS3 which results in capping the tail of ITGB1 (PubMed:17643115). Increases DOCK5 guanine nucleotide exchange activity towards Rac and plays a role in osteoclast podosome organization (By similarity). Enhances RHOA activation in the presence of DLC1 (PubMed:26427649). Required for growth factor-induced epithelial cell migration; growth factor stimulation induces TNS3 phosphorylation which changes its binding preference from DLC1 to the p85 regulatory subunit of the PI3K kinase complex, displacing PI3K inhibitor PTEN and resulting in translocation of the TNS3-p85 complex to the leading edge of migrating cells to promote RAC1 activation (PubMed:26166433). Meanwhile, PTEN switches binding preference from p85 to DLC1 and the PTEN-DLC1 complex translocates to the posterior of migrating cells to activate RHOA (PubMed:26166433). Acts as an adapter protein by bridging the association of scaffolding protein PEAK1 with integrins ITGB1, ITGB3 and ITGB5 which contributes to the promotion of cell migration (PubMed:35687021). Controls tonsil-derived mesenchymal stem cell proliferation and differentiation by regulating the activity of integrin ITGB1 (PubMed:31905841).</text>
</comment>
<comment type="subunit">
    <text evidence="1 8 12 13 16">Interacts with EGFR; EGF promotes the interaction with EGFR (PubMed:15140944). Interacts with PTK2/FAK1 and BCAR1 (PubMed:15140944). Tyrosine phosphorylation is critical for these interactions (PubMed:15140944). Interacts with Rho GTPase-activating protein DLC1 and with the regulatory p85 subunit of the PI3K kinase complex; in resting cells, interacts (via C2 tensin-type domain) with DLC1 but, following growth factor stimulation, TNS3 is phosphorylated which leads to weakened interaction with DLC1 and enhanced interaction (via C2 tensin-type domain) with p85 while DLC1 interaction with PTEN increases (PubMed:26166433). Interacts (when phosphorylated on the SH2 domain) with integrins ITGB1, ITGB3 and ITGB5 and with scaffolding protein PEAK1 (phosphorylated on 'Tyr-635'); mediates the association of PEAK1 with ITGB1, ITGB3 and ITGB5 (PubMed:35687021). Interacts (via N-terminus) with DOCK5 (via N-terminus); the interaction increases DOCK5 guanine nucleotide exchange activity towards Rac (By similarity). Interacts with receptor tyrosine kinase MET (PubMed:24814316).</text>
</comment>
<comment type="interaction">
    <interactant intactId="EBI-1220488">
        <id>Q68CZ2</id>
    </interactant>
    <interactant intactId="EBI-702093">
        <id>P56945</id>
        <label>BCAR1</label>
    </interactant>
    <organismsDiffer>false</organismsDiffer>
    <experiments>8</experiments>
</comment>
<comment type="interaction">
    <interactant intactId="EBI-1220488">
        <id>Q68CZ2</id>
    </interactant>
    <interactant intactId="EBI-727477">
        <id>P12830</id>
        <label>CDH1</label>
    </interactant>
    <organismsDiffer>false</organismsDiffer>
    <experiments>2</experiments>
</comment>
<comment type="interaction">
    <interactant intactId="EBI-1220488">
        <id>Q68CZ2</id>
    </interactant>
    <interactant intactId="EBI-297353">
        <id>P00533</id>
        <label>EGFR</label>
    </interactant>
    <organismsDiffer>false</organismsDiffer>
    <experiments>5</experiments>
</comment>
<comment type="interaction">
    <interactant intactId="EBI-1220488">
        <id>Q68CZ2</id>
    </interactant>
    <interactant intactId="EBI-641062">
        <id>P04626</id>
        <label>ERBB2</label>
    </interactant>
    <organismsDiffer>false</organismsDiffer>
    <experiments>2</experiments>
</comment>
<comment type="interaction">
    <interactant intactId="EBI-1220488">
        <id>Q68CZ2</id>
    </interactant>
    <interactant intactId="EBI-720706">
        <id>P21860</id>
        <label>ERBB3</label>
    </interactant>
    <organismsDiffer>false</organismsDiffer>
    <experiments>2</experiments>
</comment>
<comment type="interaction">
    <interactant intactId="EBI-1220488">
        <id>Q68CZ2</id>
    </interactant>
    <interactant intactId="EBI-1379503">
        <id>P10721</id>
        <label>KIT</label>
    </interactant>
    <organismsDiffer>false</organismsDiffer>
    <experiments>5</experiments>
</comment>
<comment type="interaction">
    <interactant intactId="EBI-1220488">
        <id>Q68CZ2</id>
    </interactant>
    <interactant intactId="EBI-1039152">
        <id>P08581</id>
        <label>MET</label>
    </interactant>
    <organismsDiffer>false</organismsDiffer>
    <experiments>3</experiments>
</comment>
<comment type="interaction">
    <interactant intactId="EBI-1220488">
        <id>Q68CZ2</id>
    </interactant>
    <interactant intactId="EBI-702142">
        <id>Q05397</id>
        <label>PTK2</label>
    </interactant>
    <organismsDiffer>false</organismsDiffer>
    <experiments>3</experiments>
</comment>
<comment type="interaction">
    <interactant intactId="EBI-1220488">
        <id>Q68CZ2</id>
    </interactant>
    <interactant intactId="EBI-621482">
        <id>P12931</id>
        <label>SRC</label>
    </interactant>
    <organismsDiffer>false</organismsDiffer>
    <experiments>13</experiments>
</comment>
<comment type="subcellular location">
    <subcellularLocation>
        <location evidence="8 10 11 16">Cell junction</location>
        <location evidence="8 10 11 16">Focal adhesion</location>
    </subcellularLocation>
    <subcellularLocation>
        <location evidence="1">Cell projection</location>
        <location evidence="1">Podosome</location>
    </subcellularLocation>
    <text evidence="11">Localizes to both focal and fibrillar adhesions but is mostly found in fibrillar adhesions.</text>
</comment>
<comment type="alternative products">
    <event type="alternative splicing"/>
    <isoform>
        <id>Q68CZ2-1</id>
        <name>1</name>
        <sequence type="displayed"/>
    </isoform>
    <isoform>
        <id>Q68CZ2-2</id>
        <name>2</name>
        <sequence type="described" ref="VSP_027123"/>
    </isoform>
    <isoform>
        <id>Q68CZ2-3</id>
        <name>3</name>
        <sequence type="described" ref="VSP_027126 VSP_027127"/>
    </isoform>
    <isoform>
        <id>Q68CZ2-4</id>
        <name>4</name>
        <sequence type="described" ref="VSP_027124 VSP_027125"/>
    </isoform>
</comment>
<comment type="tissue specificity">
    <text evidence="7 8 9 15">Expressed in umbilical vein endothelial cells, epithelial cells, and fibroblasts cells (at protein level). Highly expressed in thyroid, kidney and placenta. Low expression in heart, skeletal muscle, spleen, liver, and lung. Expressed at higher levels in tonsil-derived mesenchymal stem cells (MSCs) than in adipose tissue-derived MSCs or bone marrow-derived MSCs (PubMed:31905841). Expressed in tumor endothelial cells. Expression seems to be down-regulated in thyroid tumor tissues and in anaplastic carcinomas.</text>
</comment>
<comment type="induction">
    <text evidence="8 10">Down-regulated by EGF.</text>
</comment>
<comment type="PTM">
    <text evidence="8 13 16">Phosphorylated on Ser/Thr and Tyr residues (PubMed:26166433). Phosphorylated on Thr-323 in the C2-type tensin domain following EGF stimulation which changes its binding preference from DLC1 to the p85 regulatory subunit of the PI3K kinase complex (PubMed:26166433). EGF induces tyrosine phosphorylation in a time- and dose-dependent manner (PubMed:15140944). Phosphorylation of the SH2 domain enhances interaction with PEAK1 (PubMed:35687021).</text>
</comment>
<comment type="similarity">
    <text evidence="20">Belongs to the PTEN phosphatase protein family.</text>
</comment>
<keyword id="KW-0025">Alternative splicing</keyword>
<keyword id="KW-0965">Cell junction</keyword>
<keyword id="KW-0966">Cell projection</keyword>
<keyword id="KW-0378">Hydrolase</keyword>
<keyword id="KW-0597">Phosphoprotein</keyword>
<keyword id="KW-0904">Protein phosphatase</keyword>
<keyword id="KW-1267">Proteomics identification</keyword>
<keyword id="KW-1185">Reference proteome</keyword>
<keyword id="KW-0727">SH2 domain</keyword>
<protein>
    <recommendedName>
        <fullName>Tensin-3</fullName>
        <ecNumber evidence="20">3.1.3.-</ecNumber>
    </recommendedName>
    <alternativeName>
        <fullName>Tensin-like SH2 domain-containing protein 1</fullName>
    </alternativeName>
    <alternativeName>
        <fullName>Tumor endothelial marker 6</fullName>
    </alternativeName>
</protein>
<sequence>MEEGHGLDLTYITERIIAVSFPAGCSEESYLHNLQEVTRMLKSKHGDNYLVLNLSEKRYDLTKLNPKIMDVGWPELHAPPLDKMCTICKAQESWLNSNLQHVVVIHCRGGKGRIGVVISSYMHFTNVSASADQALDRFAMKKFYDDKVSALMQPSQKRYVQFLSGLLSGSVKMNASPLFLHFVILHGTPNFDTGGVCRPFLKLYQAMQPVYTSGIYNVGPENPSRICIVIEPAQLLKGDVMVKCYHKKYRSATRDVIFRLQFHTGAVQGYGLVFGKEDLDNASKDDRFPDYGKVELVFSATPEKIQGSEHLYNDHGVIVDYNTTDPLIRWDSYENLSADGEVLHTQGPVDGSLYAKVRKKSSSDPGIPGGPQAIPATNSPDHSDHTLSVSSDSGHSTASARTDKTEERLAPGTRRGLSAQEKAELDQLLSGFGLEDPGSSLKEMTDARSKYSGTRHVVPAQVHVNGDAALKDRETDILDDEMPHHDLHSVDSLGTLSSSEGPQSAHLGPFTCHKSSQNSLLSDGFGSNVGEDPQGTLVPDLGLGMDGPYERERTFGSREPKQPQPLLRKPSVSAQMQAYGQSSYSTQTWVRQQQMVVAHQYSFAPDGEARLVSRCPADNPGLVQAQPRVPLTPTRGTSSRVAVQRGVGSGPHPPDTQQPSPSKAFKPRFPGDQVVNGAGPELSTGPSPGSPTLDIDQSIEQLNRLILELDPTFEPIPTHMNALGSQANGSVSPDSVGGGLRASSRLPDTGEGPSRATGRQGSSAEQPLGGRLRKLSLGQYDNDAGGQLPFSKCAWGKAGVDYAPNLPPFPSPADVKETMTPGYPQDLDIIDGRILSSKESMCSTPAFPVSPETPYVKTALRHPPFSPPEPPLSSPASQHKGGREPRSCPETLTHAVGMSESPIGPKSTMLRADASSTPSFQQAFASSCTISSNGPGQRRESSSSAERQWVESSPKPMVSLLGSGRPTGSPLSAEFSGTRKDSPVLSCFPPSELQAPFHSHELSLAEPPDSLAPPSSQAFLGFGTAPVGSGLPPEEDLGALLANSHGASPTPSIPLTATGAADNGFLSHNFLTVAPGHSSHHSPGLQGQGVTLPGQPPLPEKKRASEGDRSLGSVSPSSSGFSSPHSGSTISIPFPNVLPDFSKASEAASPLPDSPGDKLVIVKFVQDTSKFWYKADISREQAIAMLKDKEPGSFIVRDSHSFRGAYGLAMKVATPPPSVLQLNKKAGDLANELVRHFLIECTPKGVRLKGCSNEPYFGSLTALVCQHSITPLALPCKLLIPERDPLEEIAESSPQTAANSAAELLKQGAACNVWYLNSVEMESLTGHQAIQKALSITLVQEPPPVSTVVHFKVSAQGITLTDNQRKLFFRRHYPVNSVIFCALDPQDRKWIKDGPSSKVFGFVARKQGSATDNVCHLFAEHDPEQPASAIVNFVSKVMIGSPKKV</sequence>
<reference key="1">
    <citation type="journal article" date="2001" name="Cancer Res.">
        <title>Cell surface tumor endothelial markers are conserved in mice and humans.</title>
        <authorList>
            <person name="Carson-Walter E.B."/>
            <person name="Watkins D.N."/>
            <person name="Nanda A."/>
            <person name="Vogelstein B."/>
            <person name="Kinzler K.W."/>
            <person name="St Croix B."/>
        </authorList>
    </citation>
    <scope>NUCLEOTIDE SEQUENCE [MRNA] (ISOFORM 2)</scope>
    <scope>TISSUE SPECIFICITY</scope>
</reference>
<reference key="2">
    <citation type="journal article" date="2004" name="Mol. Cancer Res.">
        <title>Epidermal growth factor modulates tyrosine phosphorylation of a novel tensin family member, tensin3.</title>
        <authorList>
            <person name="Cui Y."/>
            <person name="Liao Y.-C."/>
            <person name="Lo S.H."/>
        </authorList>
    </citation>
    <scope>NUCLEOTIDE SEQUENCE [MRNA] (ISOFORM 1)</scope>
    <scope>SUBCELLULAR LOCATION</scope>
    <scope>TISSUE SPECIFICITY</scope>
    <scope>INDUCTION</scope>
    <scope>INTERACTION WITH EGFR; PTK2/FAK1 AND BCAR1</scope>
    <scope>PHOSPHORYLATION</scope>
</reference>
<reference key="3">
    <citation type="journal article" date="2004" name="Nat. Genet.">
        <title>Complete sequencing and characterization of 21,243 full-length human cDNAs.</title>
        <authorList>
            <person name="Ota T."/>
            <person name="Suzuki Y."/>
            <person name="Nishikawa T."/>
            <person name="Otsuki T."/>
            <person name="Sugiyama T."/>
            <person name="Irie R."/>
            <person name="Wakamatsu A."/>
            <person name="Hayashi K."/>
            <person name="Sato H."/>
            <person name="Nagai K."/>
            <person name="Kimura K."/>
            <person name="Makita H."/>
            <person name="Sekine M."/>
            <person name="Obayashi M."/>
            <person name="Nishi T."/>
            <person name="Shibahara T."/>
            <person name="Tanaka T."/>
            <person name="Ishii S."/>
            <person name="Yamamoto J."/>
            <person name="Saito K."/>
            <person name="Kawai Y."/>
            <person name="Isono Y."/>
            <person name="Nakamura Y."/>
            <person name="Nagahari K."/>
            <person name="Murakami K."/>
            <person name="Yasuda T."/>
            <person name="Iwayanagi T."/>
            <person name="Wagatsuma M."/>
            <person name="Shiratori A."/>
            <person name="Sudo H."/>
            <person name="Hosoiri T."/>
            <person name="Kaku Y."/>
            <person name="Kodaira H."/>
            <person name="Kondo H."/>
            <person name="Sugawara M."/>
            <person name="Takahashi M."/>
            <person name="Kanda K."/>
            <person name="Yokoi T."/>
            <person name="Furuya T."/>
            <person name="Kikkawa E."/>
            <person name="Omura Y."/>
            <person name="Abe K."/>
            <person name="Kamihara K."/>
            <person name="Katsuta N."/>
            <person name="Sato K."/>
            <person name="Tanikawa M."/>
            <person name="Yamazaki M."/>
            <person name="Ninomiya K."/>
            <person name="Ishibashi T."/>
            <person name="Yamashita H."/>
            <person name="Murakawa K."/>
            <person name="Fujimori K."/>
            <person name="Tanai H."/>
            <person name="Kimata M."/>
            <person name="Watanabe M."/>
            <person name="Hiraoka S."/>
            <person name="Chiba Y."/>
            <person name="Ishida S."/>
            <person name="Ono Y."/>
            <person name="Takiguchi S."/>
            <person name="Watanabe S."/>
            <person name="Yosida M."/>
            <person name="Hotuta T."/>
            <person name="Kusano J."/>
            <person name="Kanehori K."/>
            <person name="Takahashi-Fujii A."/>
            <person name="Hara H."/>
            <person name="Tanase T.-O."/>
            <person name="Nomura Y."/>
            <person name="Togiya S."/>
            <person name="Komai F."/>
            <person name="Hara R."/>
            <person name="Takeuchi K."/>
            <person name="Arita M."/>
            <person name="Imose N."/>
            <person name="Musashino K."/>
            <person name="Yuuki H."/>
            <person name="Oshima A."/>
            <person name="Sasaki N."/>
            <person name="Aotsuka S."/>
            <person name="Yoshikawa Y."/>
            <person name="Matsunawa H."/>
            <person name="Ichihara T."/>
            <person name="Shiohata N."/>
            <person name="Sano S."/>
            <person name="Moriya S."/>
            <person name="Momiyama H."/>
            <person name="Satoh N."/>
            <person name="Takami S."/>
            <person name="Terashima Y."/>
            <person name="Suzuki O."/>
            <person name="Nakagawa S."/>
            <person name="Senoh A."/>
            <person name="Mizoguchi H."/>
            <person name="Goto Y."/>
            <person name="Shimizu F."/>
            <person name="Wakebe H."/>
            <person name="Hishigaki H."/>
            <person name="Watanabe T."/>
            <person name="Sugiyama A."/>
            <person name="Takemoto M."/>
            <person name="Kawakami B."/>
            <person name="Yamazaki M."/>
            <person name="Watanabe K."/>
            <person name="Kumagai A."/>
            <person name="Itakura S."/>
            <person name="Fukuzumi Y."/>
            <person name="Fujimori Y."/>
            <person name="Komiyama M."/>
            <person name="Tashiro H."/>
            <person name="Tanigami A."/>
            <person name="Fujiwara T."/>
            <person name="Ono T."/>
            <person name="Yamada K."/>
            <person name="Fujii Y."/>
            <person name="Ozaki K."/>
            <person name="Hirao M."/>
            <person name="Ohmori Y."/>
            <person name="Kawabata A."/>
            <person name="Hikiji T."/>
            <person name="Kobatake N."/>
            <person name="Inagaki H."/>
            <person name="Ikema Y."/>
            <person name="Okamoto S."/>
            <person name="Okitani R."/>
            <person name="Kawakami T."/>
            <person name="Noguchi S."/>
            <person name="Itoh T."/>
            <person name="Shigeta K."/>
            <person name="Senba T."/>
            <person name="Matsumura K."/>
            <person name="Nakajima Y."/>
            <person name="Mizuno T."/>
            <person name="Morinaga M."/>
            <person name="Sasaki M."/>
            <person name="Togashi T."/>
            <person name="Oyama M."/>
            <person name="Hata H."/>
            <person name="Watanabe M."/>
            <person name="Komatsu T."/>
            <person name="Mizushima-Sugano J."/>
            <person name="Satoh T."/>
            <person name="Shirai Y."/>
            <person name="Takahashi Y."/>
            <person name="Nakagawa K."/>
            <person name="Okumura K."/>
            <person name="Nagase T."/>
            <person name="Nomura N."/>
            <person name="Kikuchi H."/>
            <person name="Masuho Y."/>
            <person name="Yamashita R."/>
            <person name="Nakai K."/>
            <person name="Yada T."/>
            <person name="Nakamura Y."/>
            <person name="Ohara O."/>
            <person name="Isogai T."/>
            <person name="Sugano S."/>
        </authorList>
    </citation>
    <scope>NUCLEOTIDE SEQUENCE [LARGE SCALE MRNA] (ISOFORM 3)</scope>
    <source>
        <tissue>Spleen</tissue>
    </source>
</reference>
<reference key="4">
    <citation type="journal article" date="2001" name="Genome Res.">
        <title>Towards a catalog of human genes and proteins: sequencing and analysis of 500 novel complete protein coding human cDNAs.</title>
        <authorList>
            <person name="Wiemann S."/>
            <person name="Weil B."/>
            <person name="Wellenreuther R."/>
            <person name="Gassenhuber J."/>
            <person name="Glassl S."/>
            <person name="Ansorge W."/>
            <person name="Boecher M."/>
            <person name="Bloecker H."/>
            <person name="Bauersachs S."/>
            <person name="Blum H."/>
            <person name="Lauber J."/>
            <person name="Duesterhoeft A."/>
            <person name="Beyer A."/>
            <person name="Koehrer K."/>
            <person name="Strack N."/>
            <person name="Mewes H.-W."/>
            <person name="Ottenwaelder B."/>
            <person name="Obermaier B."/>
            <person name="Tampe J."/>
            <person name="Heubner D."/>
            <person name="Wambutt R."/>
            <person name="Korn B."/>
            <person name="Klein M."/>
            <person name="Poustka A."/>
        </authorList>
    </citation>
    <scope>NUCLEOTIDE SEQUENCE [LARGE SCALE MRNA] (ISOFORM 1)</scope>
    <source>
        <tissue>Amygdala</tissue>
    </source>
</reference>
<reference key="5">
    <citation type="journal article" date="2003" name="Nature">
        <title>The DNA sequence of human chromosome 7.</title>
        <authorList>
            <person name="Hillier L.W."/>
            <person name="Fulton R.S."/>
            <person name="Fulton L.A."/>
            <person name="Graves T.A."/>
            <person name="Pepin K.H."/>
            <person name="Wagner-McPherson C."/>
            <person name="Layman D."/>
            <person name="Maas J."/>
            <person name="Jaeger S."/>
            <person name="Walker R."/>
            <person name="Wylie K."/>
            <person name="Sekhon M."/>
            <person name="Becker M.C."/>
            <person name="O'Laughlin M.D."/>
            <person name="Schaller M.E."/>
            <person name="Fewell G.A."/>
            <person name="Delehaunty K.D."/>
            <person name="Miner T.L."/>
            <person name="Nash W.E."/>
            <person name="Cordes M."/>
            <person name="Du H."/>
            <person name="Sun H."/>
            <person name="Edwards J."/>
            <person name="Bradshaw-Cordum H."/>
            <person name="Ali J."/>
            <person name="Andrews S."/>
            <person name="Isak A."/>
            <person name="Vanbrunt A."/>
            <person name="Nguyen C."/>
            <person name="Du F."/>
            <person name="Lamar B."/>
            <person name="Courtney L."/>
            <person name="Kalicki J."/>
            <person name="Ozersky P."/>
            <person name="Bielicki L."/>
            <person name="Scott K."/>
            <person name="Holmes A."/>
            <person name="Harkins R."/>
            <person name="Harris A."/>
            <person name="Strong C.M."/>
            <person name="Hou S."/>
            <person name="Tomlinson C."/>
            <person name="Dauphin-Kohlberg S."/>
            <person name="Kozlowicz-Reilly A."/>
            <person name="Leonard S."/>
            <person name="Rohlfing T."/>
            <person name="Rock S.M."/>
            <person name="Tin-Wollam A.-M."/>
            <person name="Abbott A."/>
            <person name="Minx P."/>
            <person name="Maupin R."/>
            <person name="Strowmatt C."/>
            <person name="Latreille P."/>
            <person name="Miller N."/>
            <person name="Johnson D."/>
            <person name="Murray J."/>
            <person name="Woessner J.P."/>
            <person name="Wendl M.C."/>
            <person name="Yang S.-P."/>
            <person name="Schultz B.R."/>
            <person name="Wallis J.W."/>
            <person name="Spieth J."/>
            <person name="Bieri T.A."/>
            <person name="Nelson J.O."/>
            <person name="Berkowicz N."/>
            <person name="Wohldmann P.E."/>
            <person name="Cook L.L."/>
            <person name="Hickenbotham M.T."/>
            <person name="Eldred J."/>
            <person name="Williams D."/>
            <person name="Bedell J.A."/>
            <person name="Mardis E.R."/>
            <person name="Clifton S.W."/>
            <person name="Chissoe S.L."/>
            <person name="Marra M.A."/>
            <person name="Raymond C."/>
            <person name="Haugen E."/>
            <person name="Gillett W."/>
            <person name="Zhou Y."/>
            <person name="James R."/>
            <person name="Phelps K."/>
            <person name="Iadanoto S."/>
            <person name="Bubb K."/>
            <person name="Simms E."/>
            <person name="Levy R."/>
            <person name="Clendenning J."/>
            <person name="Kaul R."/>
            <person name="Kent W.J."/>
            <person name="Furey T.S."/>
            <person name="Baertsch R.A."/>
            <person name="Brent M.R."/>
            <person name="Keibler E."/>
            <person name="Flicek P."/>
            <person name="Bork P."/>
            <person name="Suyama M."/>
            <person name="Bailey J.A."/>
            <person name="Portnoy M.E."/>
            <person name="Torrents D."/>
            <person name="Chinwalla A.T."/>
            <person name="Gish W.R."/>
            <person name="Eddy S.R."/>
            <person name="McPherson J.D."/>
            <person name="Olson M.V."/>
            <person name="Eichler E.E."/>
            <person name="Green E.D."/>
            <person name="Waterston R.H."/>
            <person name="Wilson R.K."/>
        </authorList>
    </citation>
    <scope>NUCLEOTIDE SEQUENCE [LARGE SCALE GENOMIC DNA]</scope>
</reference>
<reference key="6">
    <citation type="submission" date="2005-09" db="EMBL/GenBank/DDBJ databases">
        <authorList>
            <person name="Mural R.J."/>
            <person name="Istrail S."/>
            <person name="Sutton G.G."/>
            <person name="Florea L."/>
            <person name="Halpern A.L."/>
            <person name="Mobarry C.M."/>
            <person name="Lippert R."/>
            <person name="Walenz B."/>
            <person name="Shatkay H."/>
            <person name="Dew I."/>
            <person name="Miller J.R."/>
            <person name="Flanigan M.J."/>
            <person name="Edwards N.J."/>
            <person name="Bolanos R."/>
            <person name="Fasulo D."/>
            <person name="Halldorsson B.V."/>
            <person name="Hannenhalli S."/>
            <person name="Turner R."/>
            <person name="Yooseph S."/>
            <person name="Lu F."/>
            <person name="Nusskern D.R."/>
            <person name="Shue B.C."/>
            <person name="Zheng X.H."/>
            <person name="Zhong F."/>
            <person name="Delcher A.L."/>
            <person name="Huson D.H."/>
            <person name="Kravitz S.A."/>
            <person name="Mouchard L."/>
            <person name="Reinert K."/>
            <person name="Remington K.A."/>
            <person name="Clark A.G."/>
            <person name="Waterman M.S."/>
            <person name="Eichler E.E."/>
            <person name="Adams M.D."/>
            <person name="Hunkapiller M.W."/>
            <person name="Myers E.W."/>
            <person name="Venter J.C."/>
        </authorList>
    </citation>
    <scope>NUCLEOTIDE SEQUENCE [LARGE SCALE GENOMIC DNA]</scope>
</reference>
<reference key="7">
    <citation type="journal article" date="2004" name="Genome Res.">
        <title>The status, quality, and expansion of the NIH full-length cDNA project: the Mammalian Gene Collection (MGC).</title>
        <authorList>
            <consortium name="The MGC Project Team"/>
        </authorList>
    </citation>
    <scope>NUCLEOTIDE SEQUENCE [LARGE SCALE MRNA] (ISOFORMS 1 AND 4)</scope>
    <source>
        <tissue>Brain</tissue>
        <tissue>Kidney</tissue>
    </source>
</reference>
<reference key="8">
    <citation type="journal article" date="2006" name="J. Mol. Endocrinol.">
        <title>Tensin3 is a novel thyroid-specific gene.</title>
        <authorList>
            <person name="Maeda I."/>
            <person name="Takano T."/>
            <person name="Yoshida H."/>
            <person name="Matsuzuka F."/>
            <person name="Amino N."/>
            <person name="Miyauchi A."/>
        </authorList>
    </citation>
    <scope>NUCLEOTIDE SEQUENCE [MRNA] OF 749-1445</scope>
    <scope>TISSUE SPECIFICITY</scope>
</reference>
<reference key="9">
    <citation type="journal article" date="2007" name="Nat. Cell Biol.">
        <title>A reciprocal tensin-3-cten switch mediates EGF-driven mammary cell migration.</title>
        <authorList>
            <person name="Katz M."/>
            <person name="Amit I."/>
            <person name="Citri A."/>
            <person name="Shay T."/>
            <person name="Carvalho S."/>
            <person name="Lavi S."/>
            <person name="Milanezi F."/>
            <person name="Lyass L."/>
            <person name="Amariglio N."/>
            <person name="Jacob-Hirsch J."/>
            <person name="Ben-Chetrit N."/>
            <person name="Tarcic G."/>
            <person name="Lindzen M."/>
            <person name="Avraham R."/>
            <person name="Liao Y.C."/>
            <person name="Trusk P."/>
            <person name="Lyass A."/>
            <person name="Rechavi G."/>
            <person name="Spector N.L."/>
            <person name="Lo S.H."/>
            <person name="Schmitt F."/>
            <person name="Bacus S.S."/>
            <person name="Yarden Y."/>
        </authorList>
    </citation>
    <scope>FUNCTION</scope>
    <scope>SUBCELLULAR LOCATION</scope>
    <scope>INDUCTION</scope>
    <scope>KNOCKDOWN IN MCF10A CELLS</scope>
</reference>
<reference key="10">
    <citation type="journal article" date="2008" name="J. Proteome Res.">
        <title>Combining protein-based IMAC, peptide-based IMAC, and MudPIT for efficient phosphoproteomic analysis.</title>
        <authorList>
            <person name="Cantin G.T."/>
            <person name="Yi W."/>
            <person name="Lu B."/>
            <person name="Park S.K."/>
            <person name="Xu T."/>
            <person name="Lee J.-D."/>
            <person name="Yates J.R. III"/>
        </authorList>
    </citation>
    <scope>IDENTIFICATION BY MASS SPECTROMETRY [LARGE SCALE ANALYSIS]</scope>
    <source>
        <tissue>Cervix carcinoma</tissue>
    </source>
</reference>
<reference key="11">
    <citation type="journal article" date="2008" name="Proc. Natl. Acad. Sci. U.S.A.">
        <title>A quantitative atlas of mitotic phosphorylation.</title>
        <authorList>
            <person name="Dephoure N."/>
            <person name="Zhou C."/>
            <person name="Villen J."/>
            <person name="Beausoleil S.A."/>
            <person name="Bakalarski C.E."/>
            <person name="Elledge S.J."/>
            <person name="Gygi S.P."/>
        </authorList>
    </citation>
    <scope>PHOSPHORYLATION [LARGE SCALE ANALYSIS] AT SER-332; THR-632; SER-660; SER-776; SER-866; SER-901; SER-1149; SER-1154 AND SER-1293</scope>
    <scope>IDENTIFICATION BY MASS SPECTROMETRY [LARGE SCALE ANALYSIS]</scope>
    <source>
        <tissue>Cervix carcinoma</tissue>
    </source>
</reference>
<reference key="12">
    <citation type="journal article" date="2009" name="Anal. Chem.">
        <title>Lys-N and trypsin cover complementary parts of the phosphoproteome in a refined SCX-based approach.</title>
        <authorList>
            <person name="Gauci S."/>
            <person name="Helbig A.O."/>
            <person name="Slijper M."/>
            <person name="Krijgsveld J."/>
            <person name="Heck A.J."/>
            <person name="Mohammed S."/>
        </authorList>
    </citation>
    <scope>IDENTIFICATION BY MASS SPECTROMETRY [LARGE SCALE ANALYSIS]</scope>
</reference>
<reference key="13">
    <citation type="journal article" date="2010" name="J. Cell. Biochem.">
        <title>Tensin 2 modulates cell contractility in 3D collagen gels through the RhoGAP DLC1.</title>
        <authorList>
            <person name="Clark K."/>
            <person name="Howe J.D."/>
            <person name="Pullar C.E."/>
            <person name="Green J.A."/>
            <person name="Artym V.V."/>
            <person name="Yamada K.M."/>
            <person name="Critchley D.R."/>
        </authorList>
    </citation>
    <scope>SUBCELLULAR LOCATION</scope>
</reference>
<reference key="14">
    <citation type="journal article" date="2010" name="Sci. Signal.">
        <title>Quantitative phosphoproteomics reveals widespread full phosphorylation site occupancy during mitosis.</title>
        <authorList>
            <person name="Olsen J.V."/>
            <person name="Vermeulen M."/>
            <person name="Santamaria A."/>
            <person name="Kumar C."/>
            <person name="Miller M.L."/>
            <person name="Jensen L.J."/>
            <person name="Gnad F."/>
            <person name="Cox J."/>
            <person name="Jensen T.S."/>
            <person name="Nigg E.A."/>
            <person name="Brunak S."/>
            <person name="Mann M."/>
        </authorList>
    </citation>
    <scope>PHOSPHORYLATION [LARGE SCALE ANALYSIS] AT SER-649; SER-660; SER-735; SER-776; TYR-780; SER-811; SER-1149 AND SER-1154</scope>
    <scope>IDENTIFICATION BY MASS SPECTROMETRY [LARGE SCALE ANALYSIS]</scope>
    <source>
        <tissue>Cervix carcinoma</tissue>
    </source>
</reference>
<reference key="15">
    <citation type="journal article" date="2011" name="BMC Syst. Biol.">
        <title>Initial characterization of the human central proteome.</title>
        <authorList>
            <person name="Burkard T.R."/>
            <person name="Planyavsky M."/>
            <person name="Kaupe I."/>
            <person name="Breitwieser F.P."/>
            <person name="Buerckstuemmer T."/>
            <person name="Bennett K.L."/>
            <person name="Superti-Furga G."/>
            <person name="Colinge J."/>
        </authorList>
    </citation>
    <scope>IDENTIFICATION BY MASS SPECTROMETRY [LARGE SCALE ANALYSIS]</scope>
</reference>
<reference key="16">
    <citation type="journal article" date="2011" name="Sci. Signal.">
        <title>System-wide temporal characterization of the proteome and phosphoproteome of human embryonic stem cell differentiation.</title>
        <authorList>
            <person name="Rigbolt K.T."/>
            <person name="Prokhorova T.A."/>
            <person name="Akimov V."/>
            <person name="Henningsen J."/>
            <person name="Johansen P.T."/>
            <person name="Kratchmarova I."/>
            <person name="Kassem M."/>
            <person name="Mann M."/>
            <person name="Olsen J.V."/>
            <person name="Blagoev B."/>
        </authorList>
    </citation>
    <scope>IDENTIFICATION BY MASS SPECTROMETRY [LARGE SCALE ANALYSIS]</scope>
</reference>
<reference key="17">
    <citation type="journal article" date="2012" name="Proc. Natl. Acad. Sci. U.S.A.">
        <title>N-terminal acetylome analyses and functional insights of the N-terminal acetyltransferase NatB.</title>
        <authorList>
            <person name="Van Damme P."/>
            <person name="Lasa M."/>
            <person name="Polevoda B."/>
            <person name="Gazquez C."/>
            <person name="Elosegui-Artola A."/>
            <person name="Kim D.S."/>
            <person name="De Juan-Pardo E."/>
            <person name="Demeyer K."/>
            <person name="Hole K."/>
            <person name="Larrea E."/>
            <person name="Timmerman E."/>
            <person name="Prieto J."/>
            <person name="Arnesen T."/>
            <person name="Sherman F."/>
            <person name="Gevaert K."/>
            <person name="Aldabe R."/>
        </authorList>
    </citation>
    <scope>IDENTIFICATION BY MASS SPECTROMETRY [LARGE SCALE ANALYSIS]</scope>
</reference>
<reference key="18">
    <citation type="journal article" date="2013" name="J. Proteome Res.">
        <title>Toward a comprehensive characterization of a human cancer cell phosphoproteome.</title>
        <authorList>
            <person name="Zhou H."/>
            <person name="Di Palma S."/>
            <person name="Preisinger C."/>
            <person name="Peng M."/>
            <person name="Polat A.N."/>
            <person name="Heck A.J."/>
            <person name="Mohammed S."/>
        </authorList>
    </citation>
    <scope>PHOSPHORYLATION [LARGE SCALE ANALYSIS] AT SER-660; SER-776; SER-1149 AND SER-1441</scope>
    <scope>IDENTIFICATION BY MASS SPECTROMETRY [LARGE SCALE ANALYSIS]</scope>
    <source>
        <tissue>Cervix carcinoma</tissue>
    </source>
</reference>
<reference key="19">
    <citation type="journal article" date="2014" name="Dev. Cell">
        <title>Tensin-4-dependent MET stabilization is essential for survival and proliferation in carcinoma cells.</title>
        <authorList>
            <person name="Muharram G."/>
            <person name="Sahgal P."/>
            <person name="Korpela T."/>
            <person name="De Franceschi N."/>
            <person name="Kaukonen R."/>
            <person name="Clark K."/>
            <person name="Tulasne D."/>
            <person name="Carpen O."/>
            <person name="Ivaska J."/>
        </authorList>
    </citation>
    <scope>INTERACTION WITH MET</scope>
</reference>
<reference key="20">
    <citation type="journal article" date="2014" name="J. Proteomics">
        <title>An enzyme assisted RP-RPLC approach for in-depth analysis of human liver phosphoproteome.</title>
        <authorList>
            <person name="Bian Y."/>
            <person name="Song C."/>
            <person name="Cheng K."/>
            <person name="Dong M."/>
            <person name="Wang F."/>
            <person name="Huang J."/>
            <person name="Sun D."/>
            <person name="Wang L."/>
            <person name="Ye M."/>
            <person name="Zou H."/>
        </authorList>
    </citation>
    <scope>PHOSPHORYLATION [LARGE SCALE ANALYSIS] AT SER-361; SER-440; SER-516; SER-776; SER-811; SER-901; SER-1149 AND SER-1154</scope>
    <scope>IDENTIFICATION BY MASS SPECTROMETRY [LARGE SCALE ANALYSIS]</scope>
    <source>
        <tissue>Liver</tissue>
    </source>
</reference>
<reference key="21">
    <citation type="journal article" date="2015" name="Biochim. Biophys. Acta">
        <title>Tensin1 positively regulates RhoA activity through its interaction with DLC1.</title>
        <authorList>
            <person name="Shih Y.P."/>
            <person name="Sun P."/>
            <person name="Wang A."/>
            <person name="Lo S.H."/>
        </authorList>
    </citation>
    <scope>FUNCTION</scope>
</reference>
<reference key="22">
    <citation type="journal article" date="2018" name="Biochim. Biophys. Acta">
        <authorList>
            <person name="Shih Y.P."/>
            <person name="Sun P."/>
            <person name="Wang A."/>
            <person name="Lo S.H."/>
        </authorList>
    </citation>
    <scope>ERRATUM OF PUBMED:26427649</scope>
</reference>
<reference key="23">
    <citation type="journal article" date="2015" name="Nat. Commun.">
        <title>A phosphorylation switch controls the spatiotemporal activation of Rho GTPases in directional cell migration.</title>
        <authorList>
            <person name="Cao X."/>
            <person name="Kaneko T."/>
            <person name="Li J.S."/>
            <person name="Liu A.D."/>
            <person name="Voss C."/>
            <person name="Li S.S."/>
        </authorList>
    </citation>
    <scope>FUNCTION</scope>
    <scope>INTERACTION WITH DLC1 AND PI3K</scope>
    <scope>PHOSPHORYLATION AT THR-323</scope>
    <scope>MUTAGENESIS OF TYR-321 AND THR-323</scope>
</reference>
<reference key="24">
    <citation type="journal article" date="2019" name="Cells">
        <title>Tensin-3 Regulates Integrin-Mediated Proliferation and Differentiation of Tonsil-Derived Mesenchymal Stem Cells.</title>
        <authorList>
            <person name="Park G.C."/>
            <person name="Kim H.S."/>
            <person name="Park H.Y."/>
            <person name="Seo Y."/>
            <person name="Kim J.M."/>
            <person name="Shin S.C."/>
            <person name="Kwon H.K."/>
            <person name="Sung E.S."/>
            <person name="Lee J.C."/>
            <person name="Lee B.J."/>
        </authorList>
    </citation>
    <scope>FUNCTION</scope>
    <scope>TISSUE SPECIFICITY</scope>
</reference>
<reference key="25">
    <citation type="journal article" date="2022" name="J. Cell Biol.">
        <title>PEAK1 Y635 phosphorylation regulates cell migration through association with Tensin3 and integrins.</title>
        <authorList>
            <person name="Zuidema A."/>
            <person name="Atherton P."/>
            <person name="Kreft M."/>
            <person name="Hoekman L."/>
            <person name="Bleijerveld O.B."/>
            <person name="Nagaraj N."/>
            <person name="Chen N."/>
            <person name="Faessler R."/>
            <person name="Sonnenberg A."/>
        </authorList>
    </citation>
    <scope>FUNCTION</scope>
    <scope>INTERACTION WITH ITGB1; ITGB3; ITGB5 AND PEAK1</scope>
    <scope>SUBCELLULAR LOCATION</scope>
    <scope>PHOSPHORYLATION</scope>
    <scope>MUTAGENESIS OF TYR-1173; TYR-1206 AND TYR-1256</scope>
</reference>
<organism>
    <name type="scientific">Homo sapiens</name>
    <name type="common">Human</name>
    <dbReference type="NCBI Taxonomy" id="9606"/>
    <lineage>
        <taxon>Eukaryota</taxon>
        <taxon>Metazoa</taxon>
        <taxon>Chordata</taxon>
        <taxon>Craniata</taxon>
        <taxon>Vertebrata</taxon>
        <taxon>Euteleostomi</taxon>
        <taxon>Mammalia</taxon>
        <taxon>Eutheria</taxon>
        <taxon>Euarchontoglires</taxon>
        <taxon>Primates</taxon>
        <taxon>Haplorrhini</taxon>
        <taxon>Catarrhini</taxon>
        <taxon>Hominidae</taxon>
        <taxon>Homo</taxon>
    </lineage>
</organism>
<feature type="chain" id="PRO_0000295915" description="Tensin-3">
    <location>
        <begin position="1"/>
        <end position="1445"/>
    </location>
</feature>
<feature type="domain" description="Phosphatase tensin-type" evidence="5">
    <location>
        <begin position="1"/>
        <end position="170"/>
    </location>
</feature>
<feature type="domain" description="C2 tensin-type" evidence="4">
    <location>
        <begin position="175"/>
        <end position="301"/>
    </location>
</feature>
<feature type="domain" description="SH2" evidence="3">
    <location>
        <begin position="1172"/>
        <end position="1282"/>
    </location>
</feature>
<feature type="domain" description="PTB" evidence="2">
    <location>
        <begin position="1310"/>
        <end position="1444"/>
    </location>
</feature>
<feature type="region of interest" description="Disordered" evidence="6">
    <location>
        <begin position="358"/>
        <end position="421"/>
    </location>
</feature>
<feature type="region of interest" description="Disordered" evidence="6">
    <location>
        <begin position="538"/>
        <end position="568"/>
    </location>
</feature>
<feature type="region of interest" description="Disordered" evidence="6">
    <location>
        <begin position="618"/>
        <end position="695"/>
    </location>
</feature>
<feature type="region of interest" description="Disordered" evidence="6">
    <location>
        <begin position="717"/>
        <end position="769"/>
    </location>
</feature>
<feature type="region of interest" description="Disordered" evidence="6">
    <location>
        <begin position="859"/>
        <end position="981"/>
    </location>
</feature>
<feature type="region of interest" description="Disordered" evidence="6">
    <location>
        <begin position="1076"/>
        <end position="1127"/>
    </location>
</feature>
<feature type="compositionally biased region" description="Polar residues" evidence="6">
    <location>
        <begin position="386"/>
        <end position="400"/>
    </location>
</feature>
<feature type="compositionally biased region" description="Basic and acidic residues" evidence="6">
    <location>
        <begin position="548"/>
        <end position="561"/>
    </location>
</feature>
<feature type="compositionally biased region" description="Polar residues" evidence="6">
    <location>
        <begin position="723"/>
        <end position="733"/>
    </location>
</feature>
<feature type="compositionally biased region" description="Pro residues" evidence="6">
    <location>
        <begin position="864"/>
        <end position="873"/>
    </location>
</feature>
<feature type="compositionally biased region" description="Polar residues" evidence="6">
    <location>
        <begin position="914"/>
        <end position="935"/>
    </location>
</feature>
<feature type="compositionally biased region" description="Basic and acidic residues" evidence="6">
    <location>
        <begin position="1099"/>
        <end position="1109"/>
    </location>
</feature>
<feature type="compositionally biased region" description="Low complexity" evidence="6">
    <location>
        <begin position="1110"/>
        <end position="1127"/>
    </location>
</feature>
<feature type="modified residue" description="Phosphothreonine" evidence="13">
    <location>
        <position position="323"/>
    </location>
</feature>
<feature type="modified residue" description="Phosphoserine" evidence="21">
    <location>
        <position position="332"/>
    </location>
</feature>
<feature type="modified residue" description="Phosphoserine" evidence="24">
    <location>
        <position position="361"/>
    </location>
</feature>
<feature type="modified residue" description="Phosphoserine" evidence="24">
    <location>
        <position position="440"/>
    </location>
</feature>
<feature type="modified residue" description="Phosphoserine" evidence="24">
    <location>
        <position position="516"/>
    </location>
</feature>
<feature type="modified residue" description="Phosphoserine" evidence="1">
    <location>
        <position position="571"/>
    </location>
</feature>
<feature type="modified residue" description="Phosphothreonine" evidence="21">
    <location>
        <position position="632"/>
    </location>
</feature>
<feature type="modified residue" description="Phosphoserine" evidence="22">
    <location>
        <position position="649"/>
    </location>
</feature>
<feature type="modified residue" description="Phosphoserine" evidence="21 22 23">
    <location>
        <position position="660"/>
    </location>
</feature>
<feature type="modified residue" description="Phosphoserine" evidence="1">
    <location>
        <position position="687"/>
    </location>
</feature>
<feature type="modified residue" description="Phosphoserine" evidence="1">
    <location>
        <position position="690"/>
    </location>
</feature>
<feature type="modified residue" description="Phosphoserine" evidence="22">
    <location>
        <position position="735"/>
    </location>
</feature>
<feature type="modified residue" description="Phosphoserine" evidence="21 22 23 24">
    <location>
        <position position="776"/>
    </location>
</feature>
<feature type="modified residue" description="Phosphotyrosine" evidence="22">
    <location>
        <position position="780"/>
    </location>
</feature>
<feature type="modified residue" description="Phosphoserine" evidence="22 24">
    <location>
        <position position="811"/>
    </location>
</feature>
<feature type="modified residue" description="Phosphoserine" evidence="21">
    <location>
        <position position="866"/>
    </location>
</feature>
<feature type="modified residue" description="Phosphoserine" evidence="21 24">
    <location>
        <position position="901"/>
    </location>
</feature>
<feature type="modified residue" description="Phosphoserine" evidence="21 22 23 24">
    <location>
        <position position="1149"/>
    </location>
</feature>
<feature type="modified residue" description="Phosphoserine" evidence="21 22 24">
    <location>
        <position position="1154"/>
    </location>
</feature>
<feature type="modified residue" description="Phosphoserine" evidence="21">
    <location>
        <position position="1293"/>
    </location>
</feature>
<feature type="modified residue" description="Phosphoserine" evidence="23">
    <location>
        <position position="1441"/>
    </location>
</feature>
<feature type="splice variant" id="VSP_027123" description="In isoform 2." evidence="17">
    <location>
        <begin position="241"/>
        <end position="480"/>
    </location>
</feature>
<feature type="splice variant" id="VSP_027124" description="In isoform 4." evidence="19">
    <original>KCYHKKYR</original>
    <variation>MNYNIANI</variation>
    <location>
        <begin position="243"/>
        <end position="250"/>
    </location>
</feature>
<feature type="splice variant" id="VSP_027125" description="In isoform 4." evidence="19">
    <location>
        <begin position="251"/>
        <end position="1445"/>
    </location>
</feature>
<feature type="splice variant" id="VSP_027126" description="In isoform 3." evidence="18">
    <original>DHSDHTLSVSS</original>
    <variation>ANVLFELIGQV</variation>
    <location>
        <begin position="381"/>
        <end position="391"/>
    </location>
</feature>
<feature type="splice variant" id="VSP_027127" description="In isoform 3." evidence="18">
    <location>
        <begin position="392"/>
        <end position="1445"/>
    </location>
</feature>
<feature type="sequence variant" id="VAR_034593" description="In dbSNP:rs2293362.">
    <original>Q</original>
    <variation>H</variation>
    <location>
        <position position="600"/>
    </location>
</feature>
<feature type="sequence variant" id="VAR_034594" description="In dbSNP:rs7808646.">
    <original>G</original>
    <variation>S</variation>
    <location>
        <position position="679"/>
    </location>
</feature>
<feature type="sequence variant" id="VAR_052548" description="In dbSNP:rs3807590.">
    <original>E</original>
    <variation>K</variation>
    <location>
        <position position="1034"/>
    </location>
</feature>
<feature type="mutagenesis site" description="Constitutive interaction with p85 and interaction with DLC1 after EGF stimulation." evidence="13">
    <original>Y</original>
    <variation>T</variation>
    <location>
        <position position="321"/>
    </location>
</feature>
<feature type="mutagenesis site" description="Abolishes phosphorylation. Abolishes interaction with DLC1 and p85." evidence="13">
    <original>T</original>
    <variation>A</variation>
    <location>
        <position position="323"/>
    </location>
</feature>
<feature type="mutagenesis site" description="Constitutive interaction with p85." evidence="13">
    <original>T</original>
    <variation>E</variation>
    <location>
        <position position="323"/>
    </location>
</feature>
<feature type="mutagenesis site" description="Significantly reduced interaction with PEAK1; when associated with F-1206 and F-1256." evidence="16">
    <original>Y</original>
    <variation>F</variation>
    <location>
        <position position="1173"/>
    </location>
</feature>
<feature type="mutagenesis site" description="Significantly reduced interaction with PEAK1; when associated with F-1173 and F-1256." evidence="16">
    <original>Y</original>
    <variation>F</variation>
    <location>
        <position position="1206"/>
    </location>
</feature>
<feature type="mutagenesis site" description="Significantly reduced interaction with PEAK1; when associated with F-1173 and F-1206." evidence="16">
    <original>Y</original>
    <variation>F</variation>
    <location>
        <position position="1256"/>
    </location>
</feature>
<feature type="sequence conflict" description="In Ref. 2; AAN32667." evidence="20" ref="2">
    <original>L</original>
    <variation>P</variation>
    <location>
        <position position="31"/>
    </location>
</feature>
<feature type="sequence conflict" description="In Ref. 4; CAH18438." evidence="20" ref="4">
    <original>V</original>
    <variation>A</variation>
    <location>
        <position position="458"/>
    </location>
</feature>
<feature type="sequence conflict" description="In Ref. 2; AAN32667." evidence="20" ref="2">
    <original>A</original>
    <variation>V</variation>
    <location>
        <position position="505"/>
    </location>
</feature>
<feature type="sequence conflict" description="In Ref. 4; CAH18438." evidence="20" ref="4">
    <original>T</original>
    <variation>A</variation>
    <location>
        <position position="917"/>
    </location>
</feature>
<feature type="sequence conflict" description="In Ref. 4; CAH18438." evidence="20" ref="4">
    <original>A</original>
    <variation>T</variation>
    <location>
        <position position="1047"/>
    </location>
</feature>